<name>PSBF_BETVU</name>
<keyword id="KW-0150">Chloroplast</keyword>
<keyword id="KW-0249">Electron transport</keyword>
<keyword id="KW-0349">Heme</keyword>
<keyword id="KW-0408">Iron</keyword>
<keyword id="KW-0472">Membrane</keyword>
<keyword id="KW-0479">Metal-binding</keyword>
<keyword id="KW-0602">Photosynthesis</keyword>
<keyword id="KW-0604">Photosystem II</keyword>
<keyword id="KW-0934">Plastid</keyword>
<keyword id="KW-0793">Thylakoid</keyword>
<keyword id="KW-0812">Transmembrane</keyword>
<keyword id="KW-1133">Transmembrane helix</keyword>
<keyword id="KW-0813">Transport</keyword>
<sequence length="39" mass="4438">MTIDRTYPIFTVRWLAVHGLAIPTVSFLGSISAMQFIQR</sequence>
<feature type="chain" id="PRO_0000200360" description="Cytochrome b559 subunit beta">
    <location>
        <begin position="1"/>
        <end position="39"/>
    </location>
</feature>
<feature type="transmembrane region" description="Helical" evidence="1">
    <location>
        <begin position="14"/>
        <end position="30"/>
    </location>
</feature>
<feature type="binding site" description="axial binding residue" evidence="1">
    <location>
        <position position="18"/>
    </location>
    <ligand>
        <name>heme</name>
        <dbReference type="ChEBI" id="CHEBI:30413"/>
        <note>ligand shared with alpha subunit</note>
    </ligand>
    <ligandPart>
        <name>Fe</name>
        <dbReference type="ChEBI" id="CHEBI:18248"/>
    </ligandPart>
</feature>
<geneLocation type="chloroplast"/>
<comment type="function">
    <text evidence="1">This b-type cytochrome is tightly associated with the reaction center of photosystem II (PSII). PSII is a light-driven water:plastoquinone oxidoreductase that uses light energy to abstract electrons from H(2)O, generating O(2) and a proton gradient subsequently used for ATP formation. It consists of a core antenna complex that captures photons, and an electron transfer chain that converts photonic excitation into a charge separation.</text>
</comment>
<comment type="cofactor">
    <cofactor evidence="1">
        <name>heme b</name>
        <dbReference type="ChEBI" id="CHEBI:60344"/>
    </cofactor>
    <text evidence="1">With its partner (PsbE) binds heme. PSII binds additional chlorophylls, carotenoids and specific lipids.</text>
</comment>
<comment type="subunit">
    <text evidence="1">Heterodimer of an alpha subunit and a beta subunit. PSII is composed of 1 copy each of membrane proteins PsbA, PsbB, PsbC, PsbD, PsbE, PsbF, PsbH, PsbI, PsbJ, PsbK, PsbL, PsbM, PsbT, PsbX, PsbY, PsbZ, Psb30/Ycf12, at least 3 peripheral proteins of the oxygen-evolving complex and a large number of cofactors. It forms dimeric complexes.</text>
</comment>
<comment type="subcellular location">
    <subcellularLocation>
        <location evidence="1">Plastid</location>
        <location evidence="1">Chloroplast thylakoid membrane</location>
        <topology evidence="1">Single-pass membrane protein</topology>
    </subcellularLocation>
</comment>
<comment type="similarity">
    <text evidence="1">Belongs to the PsbE/PsbF family.</text>
</comment>
<evidence type="ECO:0000255" key="1">
    <source>
        <dbReference type="HAMAP-Rule" id="MF_00643"/>
    </source>
</evidence>
<gene>
    <name evidence="1" type="primary">psbF</name>
</gene>
<proteinExistence type="inferred from homology"/>
<protein>
    <recommendedName>
        <fullName evidence="1">Cytochrome b559 subunit beta</fullName>
    </recommendedName>
    <alternativeName>
        <fullName evidence="1">PSII reaction center subunit VI</fullName>
    </alternativeName>
</protein>
<reference key="1">
    <citation type="journal article" date="1995" name="Theor. Appl. Genet.">
        <title>Mapping of a chloroplast RFLP marker associated with the CMS cytoplasm of sugar beet (Beta vulgaris).</title>
        <authorList>
            <person name="Ran Z."/>
            <person name="Michaelis G."/>
        </authorList>
    </citation>
    <scope>NUCLEOTIDE SEQUENCE [GENOMIC DNA]</scope>
    <source>
        <strain>cv. Altissima</strain>
        <tissue>Leaf</tissue>
    </source>
</reference>
<reference key="2">
    <citation type="journal article" date="1995" name="Curr. Genet.">
        <title>The chloroplast trnP-trnW-petG gene cluster in the mitochondrial genomes of Beta vulgaris, B. trigyna and B. webbiana: evolutionary aspects.</title>
        <authorList>
            <person name="Kubo T."/>
            <person name="Yanai Y."/>
            <person name="Kinoshita T."/>
            <person name="Mikami T."/>
        </authorList>
    </citation>
    <scope>NUCLEOTIDE SEQUENCE [GENOMIC DNA]</scope>
    <source>
        <strain>cv. TK81-O</strain>
        <tissue>Leaf</tissue>
    </source>
</reference>
<reference key="3">
    <citation type="submission" date="2005-11" db="EMBL/GenBank/DDBJ databases">
        <title>Nucleotide sequence of trnP-CCA-psbL intergenic region showing organizational alteration between male-fertile and Owen cytoplasmic male sterile sugar beets.</title>
        <authorList>
            <person name="Yanai Y."/>
            <person name="Kubo T."/>
            <person name="Mikami T."/>
        </authorList>
    </citation>
    <scope>NUCLEOTIDE SEQUENCE [GENOMIC DNA]</scope>
</reference>
<dbReference type="EMBL" id="X87637">
    <property type="protein sequence ID" value="CAA60973.1"/>
    <property type="molecule type" value="Genomic_DNA"/>
</dbReference>
<dbReference type="EMBL" id="D38019">
    <property type="protein sequence ID" value="BAA07219.1"/>
    <property type="molecule type" value="Genomic_DNA"/>
</dbReference>
<dbReference type="EMBL" id="X87636">
    <property type="protein sequence ID" value="CAA60968.1"/>
    <property type="molecule type" value="Genomic_DNA"/>
</dbReference>
<dbReference type="EMBL" id="AB242560">
    <property type="protein sequence ID" value="BAE48706.1"/>
    <property type="molecule type" value="Genomic_DNA"/>
</dbReference>
<dbReference type="PIR" id="T14571">
    <property type="entry name" value="T14571"/>
</dbReference>
<dbReference type="SMR" id="P46613"/>
<dbReference type="GO" id="GO:0009535">
    <property type="term" value="C:chloroplast thylakoid membrane"/>
    <property type="evidence" value="ECO:0007669"/>
    <property type="project" value="UniProtKB-SubCell"/>
</dbReference>
<dbReference type="GO" id="GO:0009539">
    <property type="term" value="C:photosystem II reaction center"/>
    <property type="evidence" value="ECO:0007669"/>
    <property type="project" value="InterPro"/>
</dbReference>
<dbReference type="GO" id="GO:0009055">
    <property type="term" value="F:electron transfer activity"/>
    <property type="evidence" value="ECO:0007669"/>
    <property type="project" value="UniProtKB-UniRule"/>
</dbReference>
<dbReference type="GO" id="GO:0020037">
    <property type="term" value="F:heme binding"/>
    <property type="evidence" value="ECO:0007669"/>
    <property type="project" value="InterPro"/>
</dbReference>
<dbReference type="GO" id="GO:0005506">
    <property type="term" value="F:iron ion binding"/>
    <property type="evidence" value="ECO:0007669"/>
    <property type="project" value="UniProtKB-UniRule"/>
</dbReference>
<dbReference type="GO" id="GO:0009767">
    <property type="term" value="P:photosynthetic electron transport chain"/>
    <property type="evidence" value="ECO:0007669"/>
    <property type="project" value="InterPro"/>
</dbReference>
<dbReference type="HAMAP" id="MF_00643">
    <property type="entry name" value="PSII_PsbF"/>
    <property type="match status" value="1"/>
</dbReference>
<dbReference type="InterPro" id="IPR006241">
    <property type="entry name" value="PSII_cyt_b559_bsu"/>
</dbReference>
<dbReference type="InterPro" id="IPR006216">
    <property type="entry name" value="PSII_cyt_b559_CS"/>
</dbReference>
<dbReference type="InterPro" id="IPR013081">
    <property type="entry name" value="PSII_cyt_b559_N"/>
</dbReference>
<dbReference type="NCBIfam" id="TIGR01333">
    <property type="entry name" value="cyt_b559_beta"/>
    <property type="match status" value="1"/>
</dbReference>
<dbReference type="Pfam" id="PF00283">
    <property type="entry name" value="Cytochrom_B559"/>
    <property type="match status" value="1"/>
</dbReference>
<dbReference type="PIRSF" id="PIRSF000037">
    <property type="entry name" value="PsbF"/>
    <property type="match status" value="1"/>
</dbReference>
<dbReference type="SUPFAM" id="SSF161045">
    <property type="entry name" value="Cytochrome b559 subunits"/>
    <property type="match status" value="1"/>
</dbReference>
<dbReference type="PROSITE" id="PS00537">
    <property type="entry name" value="CYTOCHROME_B559"/>
    <property type="match status" value="1"/>
</dbReference>
<accession>P46613</accession>
<accession>Q2Z1Q4</accession>
<organism>
    <name type="scientific">Beta vulgaris</name>
    <name type="common">Sugar beet</name>
    <dbReference type="NCBI Taxonomy" id="161934"/>
    <lineage>
        <taxon>Eukaryota</taxon>
        <taxon>Viridiplantae</taxon>
        <taxon>Streptophyta</taxon>
        <taxon>Embryophyta</taxon>
        <taxon>Tracheophyta</taxon>
        <taxon>Spermatophyta</taxon>
        <taxon>Magnoliopsida</taxon>
        <taxon>eudicotyledons</taxon>
        <taxon>Gunneridae</taxon>
        <taxon>Pentapetalae</taxon>
        <taxon>Caryophyllales</taxon>
        <taxon>Chenopodiaceae</taxon>
        <taxon>Betoideae</taxon>
        <taxon>Beta</taxon>
    </lineage>
</organism>